<evidence type="ECO:0000255" key="1">
    <source>
        <dbReference type="HAMAP-Rule" id="MF_01371"/>
    </source>
</evidence>
<evidence type="ECO:0000305" key="2"/>
<name>RL30_BEUC1</name>
<accession>C5C0H3</accession>
<proteinExistence type="inferred from homology"/>
<reference key="1">
    <citation type="journal article" date="2009" name="Stand. Genomic Sci.">
        <title>Complete genome sequence of Beutenbergia cavernae type strain (HKI 0122).</title>
        <authorList>
            <person name="Land M."/>
            <person name="Pukall R."/>
            <person name="Abt B."/>
            <person name="Goker M."/>
            <person name="Rohde M."/>
            <person name="Glavina Del Rio T."/>
            <person name="Tice H."/>
            <person name="Copeland A."/>
            <person name="Cheng J.F."/>
            <person name="Lucas S."/>
            <person name="Chen F."/>
            <person name="Nolan M."/>
            <person name="Bruce D."/>
            <person name="Goodwin L."/>
            <person name="Pitluck S."/>
            <person name="Ivanova N."/>
            <person name="Mavromatis K."/>
            <person name="Ovchinnikova G."/>
            <person name="Pati A."/>
            <person name="Chen A."/>
            <person name="Palaniappan K."/>
            <person name="Hauser L."/>
            <person name="Chang Y.J."/>
            <person name="Jefferies C.C."/>
            <person name="Saunders E."/>
            <person name="Brettin T."/>
            <person name="Detter J.C."/>
            <person name="Han C."/>
            <person name="Chain P."/>
            <person name="Bristow J."/>
            <person name="Eisen J.A."/>
            <person name="Markowitz V."/>
            <person name="Hugenholtz P."/>
            <person name="Kyrpides N.C."/>
            <person name="Klenk H.P."/>
            <person name="Lapidus A."/>
        </authorList>
    </citation>
    <scope>NUCLEOTIDE SEQUENCE [LARGE SCALE GENOMIC DNA]</scope>
    <source>
        <strain>ATCC BAA-8 / DSM 12333 / CCUG 43141 / JCM 11478 / NBRC 16432 / NCIMB 13614 / HKI 0122</strain>
    </source>
</reference>
<organism>
    <name type="scientific">Beutenbergia cavernae (strain ATCC BAA-8 / DSM 12333 / CCUG 43141 / JCM 11478 / NBRC 16432 / NCIMB 13614 / HKI 0122)</name>
    <dbReference type="NCBI Taxonomy" id="471853"/>
    <lineage>
        <taxon>Bacteria</taxon>
        <taxon>Bacillati</taxon>
        <taxon>Actinomycetota</taxon>
        <taxon>Actinomycetes</taxon>
        <taxon>Micrococcales</taxon>
        <taxon>Beutenbergiaceae</taxon>
        <taxon>Beutenbergia</taxon>
    </lineage>
</organism>
<keyword id="KW-1185">Reference proteome</keyword>
<keyword id="KW-0687">Ribonucleoprotein</keyword>
<keyword id="KW-0689">Ribosomal protein</keyword>
<dbReference type="EMBL" id="CP001618">
    <property type="protein sequence ID" value="ACQ81369.1"/>
    <property type="molecule type" value="Genomic_DNA"/>
</dbReference>
<dbReference type="RefSeq" id="WP_015883609.1">
    <property type="nucleotide sequence ID" value="NC_012669.1"/>
</dbReference>
<dbReference type="SMR" id="C5C0H3"/>
<dbReference type="STRING" id="471853.Bcav_3125"/>
<dbReference type="KEGG" id="bcv:Bcav_3125"/>
<dbReference type="eggNOG" id="COG1841">
    <property type="taxonomic scope" value="Bacteria"/>
</dbReference>
<dbReference type="HOGENOM" id="CLU_131047_2_0_11"/>
<dbReference type="OrthoDB" id="9812790at2"/>
<dbReference type="Proteomes" id="UP000007962">
    <property type="component" value="Chromosome"/>
</dbReference>
<dbReference type="GO" id="GO:0022625">
    <property type="term" value="C:cytosolic large ribosomal subunit"/>
    <property type="evidence" value="ECO:0007669"/>
    <property type="project" value="TreeGrafter"/>
</dbReference>
<dbReference type="GO" id="GO:0003735">
    <property type="term" value="F:structural constituent of ribosome"/>
    <property type="evidence" value="ECO:0007669"/>
    <property type="project" value="InterPro"/>
</dbReference>
<dbReference type="GO" id="GO:0006412">
    <property type="term" value="P:translation"/>
    <property type="evidence" value="ECO:0007669"/>
    <property type="project" value="UniProtKB-UniRule"/>
</dbReference>
<dbReference type="CDD" id="cd01658">
    <property type="entry name" value="Ribosomal_L30"/>
    <property type="match status" value="1"/>
</dbReference>
<dbReference type="FunFam" id="3.30.1390.20:FF:000001">
    <property type="entry name" value="50S ribosomal protein L30"/>
    <property type="match status" value="1"/>
</dbReference>
<dbReference type="Gene3D" id="3.30.1390.20">
    <property type="entry name" value="Ribosomal protein L30, ferredoxin-like fold domain"/>
    <property type="match status" value="1"/>
</dbReference>
<dbReference type="HAMAP" id="MF_01371_B">
    <property type="entry name" value="Ribosomal_uL30_B"/>
    <property type="match status" value="1"/>
</dbReference>
<dbReference type="InterPro" id="IPR036919">
    <property type="entry name" value="Ribo_uL30_ferredoxin-like_sf"/>
</dbReference>
<dbReference type="InterPro" id="IPR005996">
    <property type="entry name" value="Ribosomal_uL30_bac-type"/>
</dbReference>
<dbReference type="InterPro" id="IPR016082">
    <property type="entry name" value="Ribosomal_uL30_ferredoxin-like"/>
</dbReference>
<dbReference type="NCBIfam" id="TIGR01308">
    <property type="entry name" value="rpmD_bact"/>
    <property type="match status" value="1"/>
</dbReference>
<dbReference type="PANTHER" id="PTHR15892:SF2">
    <property type="entry name" value="LARGE RIBOSOMAL SUBUNIT PROTEIN UL30M"/>
    <property type="match status" value="1"/>
</dbReference>
<dbReference type="PANTHER" id="PTHR15892">
    <property type="entry name" value="MITOCHONDRIAL RIBOSOMAL PROTEIN L30"/>
    <property type="match status" value="1"/>
</dbReference>
<dbReference type="Pfam" id="PF00327">
    <property type="entry name" value="Ribosomal_L30"/>
    <property type="match status" value="1"/>
</dbReference>
<dbReference type="PIRSF" id="PIRSF002211">
    <property type="entry name" value="Ribosomal_L30_bac-type"/>
    <property type="match status" value="1"/>
</dbReference>
<dbReference type="SUPFAM" id="SSF55129">
    <property type="entry name" value="Ribosomal protein L30p/L7e"/>
    <property type="match status" value="1"/>
</dbReference>
<protein>
    <recommendedName>
        <fullName evidence="1">Large ribosomal subunit protein uL30</fullName>
    </recommendedName>
    <alternativeName>
        <fullName evidence="2">50S ribosomal protein L30</fullName>
    </alternativeName>
</protein>
<gene>
    <name evidence="1" type="primary">rpmD</name>
    <name type="ordered locus">Bcav_3125</name>
</gene>
<feature type="chain" id="PRO_1000215051" description="Large ribosomal subunit protein uL30">
    <location>
        <begin position="1"/>
        <end position="62"/>
    </location>
</feature>
<comment type="subunit">
    <text evidence="1">Part of the 50S ribosomal subunit.</text>
</comment>
<comment type="similarity">
    <text evidence="1">Belongs to the universal ribosomal protein uL30 family.</text>
</comment>
<sequence length="62" mass="6678">MAQLKVTQTRSTIGGKQNQRETLATLGLGRIGKSTVQEDTPGVRGMIRVVAHLVSVEEVDES</sequence>